<comment type="function">
    <text evidence="1">ATP-dependent carboxylate-amine ligase which exhibits weak glutamate--cysteine ligase activity.</text>
</comment>
<comment type="catalytic activity">
    <reaction evidence="1">
        <text>L-cysteine + L-glutamate + ATP = gamma-L-glutamyl-L-cysteine + ADP + phosphate + H(+)</text>
        <dbReference type="Rhea" id="RHEA:13285"/>
        <dbReference type="ChEBI" id="CHEBI:15378"/>
        <dbReference type="ChEBI" id="CHEBI:29985"/>
        <dbReference type="ChEBI" id="CHEBI:30616"/>
        <dbReference type="ChEBI" id="CHEBI:35235"/>
        <dbReference type="ChEBI" id="CHEBI:43474"/>
        <dbReference type="ChEBI" id="CHEBI:58173"/>
        <dbReference type="ChEBI" id="CHEBI:456216"/>
        <dbReference type="EC" id="6.3.2.2"/>
    </reaction>
</comment>
<comment type="similarity">
    <text evidence="1">Belongs to the glutamate--cysteine ligase type 2 family. YbdK subfamily.</text>
</comment>
<organism>
    <name type="scientific">Rhodococcus jostii (strain RHA1)</name>
    <dbReference type="NCBI Taxonomy" id="101510"/>
    <lineage>
        <taxon>Bacteria</taxon>
        <taxon>Bacillati</taxon>
        <taxon>Actinomycetota</taxon>
        <taxon>Actinomycetes</taxon>
        <taxon>Mycobacteriales</taxon>
        <taxon>Nocardiaceae</taxon>
        <taxon>Rhodococcus</taxon>
    </lineage>
</organism>
<keyword id="KW-0067">ATP-binding</keyword>
<keyword id="KW-0436">Ligase</keyword>
<keyword id="KW-0547">Nucleotide-binding</keyword>
<evidence type="ECO:0000255" key="1">
    <source>
        <dbReference type="HAMAP-Rule" id="MF_01609"/>
    </source>
</evidence>
<dbReference type="EC" id="6.3.2.2" evidence="1"/>
<dbReference type="EMBL" id="CP000431">
    <property type="protein sequence ID" value="ABG93979.1"/>
    <property type="molecule type" value="Genomic_DNA"/>
</dbReference>
<dbReference type="RefSeq" id="WP_007301315.1">
    <property type="nucleotide sequence ID" value="NC_008268.1"/>
</dbReference>
<dbReference type="SMR" id="Q0SEQ7"/>
<dbReference type="KEGG" id="rha:RHA1_ro02172"/>
<dbReference type="eggNOG" id="COG2170">
    <property type="taxonomic scope" value="Bacteria"/>
</dbReference>
<dbReference type="HOGENOM" id="CLU_044848_1_0_11"/>
<dbReference type="OrthoDB" id="9769628at2"/>
<dbReference type="Proteomes" id="UP000008710">
    <property type="component" value="Chromosome"/>
</dbReference>
<dbReference type="GO" id="GO:0005524">
    <property type="term" value="F:ATP binding"/>
    <property type="evidence" value="ECO:0007669"/>
    <property type="project" value="UniProtKB-KW"/>
</dbReference>
<dbReference type="GO" id="GO:0004357">
    <property type="term" value="F:glutamate-cysteine ligase activity"/>
    <property type="evidence" value="ECO:0007669"/>
    <property type="project" value="UniProtKB-EC"/>
</dbReference>
<dbReference type="GO" id="GO:0042398">
    <property type="term" value="P:modified amino acid biosynthetic process"/>
    <property type="evidence" value="ECO:0007669"/>
    <property type="project" value="InterPro"/>
</dbReference>
<dbReference type="Gene3D" id="3.30.590.20">
    <property type="match status" value="1"/>
</dbReference>
<dbReference type="HAMAP" id="MF_01609">
    <property type="entry name" value="Glu_cys_ligase_2"/>
    <property type="match status" value="1"/>
</dbReference>
<dbReference type="InterPro" id="IPR050141">
    <property type="entry name" value="GCL_type2/YbdK_subfam"/>
</dbReference>
<dbReference type="InterPro" id="IPR006336">
    <property type="entry name" value="GCS2"/>
</dbReference>
<dbReference type="InterPro" id="IPR014746">
    <property type="entry name" value="Gln_synth/guanido_kin_cat_dom"/>
</dbReference>
<dbReference type="InterPro" id="IPR011793">
    <property type="entry name" value="YbdK"/>
</dbReference>
<dbReference type="NCBIfam" id="TIGR02050">
    <property type="entry name" value="gshA_cyan_rel"/>
    <property type="match status" value="1"/>
</dbReference>
<dbReference type="NCBIfam" id="NF010042">
    <property type="entry name" value="PRK13517.1-2"/>
    <property type="match status" value="1"/>
</dbReference>
<dbReference type="NCBIfam" id="NF010043">
    <property type="entry name" value="PRK13517.1-3"/>
    <property type="match status" value="1"/>
</dbReference>
<dbReference type="NCBIfam" id="NF010044">
    <property type="entry name" value="PRK13517.1-4"/>
    <property type="match status" value="1"/>
</dbReference>
<dbReference type="PANTHER" id="PTHR36510">
    <property type="entry name" value="GLUTAMATE--CYSTEINE LIGASE 2-RELATED"/>
    <property type="match status" value="1"/>
</dbReference>
<dbReference type="PANTHER" id="PTHR36510:SF1">
    <property type="entry name" value="GLUTAMATE--CYSTEINE LIGASE 2-RELATED"/>
    <property type="match status" value="1"/>
</dbReference>
<dbReference type="Pfam" id="PF04107">
    <property type="entry name" value="GCS2"/>
    <property type="match status" value="1"/>
</dbReference>
<dbReference type="SUPFAM" id="SSF55931">
    <property type="entry name" value="Glutamine synthetase/guanido kinase"/>
    <property type="match status" value="1"/>
</dbReference>
<proteinExistence type="inferred from homology"/>
<name>GCS22_RHOJR</name>
<gene>
    <name type="ordered locus">RHA1_ro02172</name>
</gene>
<feature type="chain" id="PRO_0000255809" description="Putative glutamate--cysteine ligase 2-2">
    <location>
        <begin position="1"/>
        <end position="374"/>
    </location>
</feature>
<reference key="1">
    <citation type="journal article" date="2006" name="Proc. Natl. Acad. Sci. U.S.A.">
        <title>The complete genome of Rhodococcus sp. RHA1 provides insights into a catabolic powerhouse.</title>
        <authorList>
            <person name="McLeod M.P."/>
            <person name="Warren R.L."/>
            <person name="Hsiao W.W.L."/>
            <person name="Araki N."/>
            <person name="Myhre M."/>
            <person name="Fernandes C."/>
            <person name="Miyazawa D."/>
            <person name="Wong W."/>
            <person name="Lillquist A.L."/>
            <person name="Wang D."/>
            <person name="Dosanjh M."/>
            <person name="Hara H."/>
            <person name="Petrescu A."/>
            <person name="Morin R.D."/>
            <person name="Yang G."/>
            <person name="Stott J.M."/>
            <person name="Schein J.E."/>
            <person name="Shin H."/>
            <person name="Smailus D."/>
            <person name="Siddiqui A.S."/>
            <person name="Marra M.A."/>
            <person name="Jones S.J.M."/>
            <person name="Holt R."/>
            <person name="Brinkman F.S.L."/>
            <person name="Miyauchi K."/>
            <person name="Fukuda M."/>
            <person name="Davies J.E."/>
            <person name="Mohn W.W."/>
            <person name="Eltis L.D."/>
        </authorList>
    </citation>
    <scope>NUCLEOTIDE SEQUENCE [LARGE SCALE GENOMIC DNA]</scope>
    <source>
        <strain>RHA1</strain>
    </source>
</reference>
<protein>
    <recommendedName>
        <fullName evidence="1">Putative glutamate--cysteine ligase 2-2</fullName>
        <ecNumber evidence="1">6.3.2.2</ecNumber>
    </recommendedName>
    <alternativeName>
        <fullName evidence="1">Gamma-glutamylcysteine synthetase 2-2</fullName>
        <shortName evidence="1">GCS 2-2</shortName>
        <shortName evidence="1">Gamma-GCS 2-2</shortName>
    </alternativeName>
</protein>
<accession>Q0SEQ7</accession>
<sequence>MVVPFPGSPRPTLGVEWEIALVDRVTRDLSNTAAEVFDAVANLAGPEDPRITKELLRNTVELVTGIHSTVGEAMDDLDESLDLLRRAANPLGVDLICAGTHPFAQWSTQLVTRTPDYDELIERTQWWGRQMLIWGVHVHVGVSSPQKVFPILNALLQRYPHLLALSASSPMWAGVNTGYASNRALMFQQLPTAGLPYQFANWGQYEDFISDQMKTGVITKIGGMHWDIRPAPRWGTIEVRVFDGISTRAELSSLVALVHCLIVDLDRRFEAGENLPNLQPWHVKENKWRAARYGLDAEIILDEDSNERLVTDDLNDLLEKLAPTAVRLGCADELAAVAEIPRRGASYQRQRQVAEATGGDLVAVVDALVKELGT</sequence>